<organism>
    <name type="scientific">Idiomarina loihiensis (strain ATCC BAA-735 / DSM 15497 / L2-TR)</name>
    <dbReference type="NCBI Taxonomy" id="283942"/>
    <lineage>
        <taxon>Bacteria</taxon>
        <taxon>Pseudomonadati</taxon>
        <taxon>Pseudomonadota</taxon>
        <taxon>Gammaproteobacteria</taxon>
        <taxon>Alteromonadales</taxon>
        <taxon>Idiomarinaceae</taxon>
        <taxon>Idiomarina</taxon>
    </lineage>
</organism>
<sequence>MKRVLLFLATNMAILLVVSVVFNIVMAVTGIDAQGSVGLLVFCALFGFGGAFVSLWISRWMAIRSTGARVIEKPQNQSEEWLFRTVQQQAQKAGVPMPQVAVYQSPEPNAFATGRSKNASLVAVSTGLLQSMNADEVEAVLAHEMSHIANGDMVTLTLIQGVINTFVMFFARIIASAIMRGGDNQRGGGFAYYGVVMLLEIVFGVLASTIVMWFSRQREFRADAGSADLVGKQKMIAALRRLQQGKESELDGTMLAFGIKGKRSTMSKLFMSHPPLEERIHALEQRR</sequence>
<name>HTPX_IDILO</name>
<dbReference type="EC" id="3.4.24.-" evidence="1"/>
<dbReference type="EMBL" id="AE017340">
    <property type="protein sequence ID" value="AAV82160.1"/>
    <property type="molecule type" value="Genomic_DNA"/>
</dbReference>
<dbReference type="RefSeq" id="WP_011234566.1">
    <property type="nucleotide sequence ID" value="NC_006512.1"/>
</dbReference>
<dbReference type="SMR" id="Q5QZ20"/>
<dbReference type="STRING" id="283942.IL1320"/>
<dbReference type="MEROPS" id="M48.002"/>
<dbReference type="GeneID" id="41336496"/>
<dbReference type="KEGG" id="ilo:IL1320"/>
<dbReference type="eggNOG" id="COG0501">
    <property type="taxonomic scope" value="Bacteria"/>
</dbReference>
<dbReference type="HOGENOM" id="CLU_042266_1_0_6"/>
<dbReference type="OrthoDB" id="15218at2"/>
<dbReference type="Proteomes" id="UP000001171">
    <property type="component" value="Chromosome"/>
</dbReference>
<dbReference type="GO" id="GO:0005886">
    <property type="term" value="C:plasma membrane"/>
    <property type="evidence" value="ECO:0007669"/>
    <property type="project" value="UniProtKB-SubCell"/>
</dbReference>
<dbReference type="GO" id="GO:0004222">
    <property type="term" value="F:metalloendopeptidase activity"/>
    <property type="evidence" value="ECO:0007669"/>
    <property type="project" value="UniProtKB-UniRule"/>
</dbReference>
<dbReference type="GO" id="GO:0008270">
    <property type="term" value="F:zinc ion binding"/>
    <property type="evidence" value="ECO:0007669"/>
    <property type="project" value="UniProtKB-UniRule"/>
</dbReference>
<dbReference type="GO" id="GO:0006508">
    <property type="term" value="P:proteolysis"/>
    <property type="evidence" value="ECO:0007669"/>
    <property type="project" value="UniProtKB-KW"/>
</dbReference>
<dbReference type="CDD" id="cd07335">
    <property type="entry name" value="M48B_HtpX_like"/>
    <property type="match status" value="1"/>
</dbReference>
<dbReference type="Gene3D" id="3.30.2010.10">
    <property type="entry name" value="Metalloproteases ('zincins'), catalytic domain"/>
    <property type="match status" value="1"/>
</dbReference>
<dbReference type="HAMAP" id="MF_00188">
    <property type="entry name" value="Pept_M48_protease_HtpX"/>
    <property type="match status" value="1"/>
</dbReference>
<dbReference type="InterPro" id="IPR050083">
    <property type="entry name" value="HtpX_protease"/>
</dbReference>
<dbReference type="InterPro" id="IPR022919">
    <property type="entry name" value="Pept_M48_protease_HtpX"/>
</dbReference>
<dbReference type="InterPro" id="IPR001915">
    <property type="entry name" value="Peptidase_M48"/>
</dbReference>
<dbReference type="NCBIfam" id="NF003965">
    <property type="entry name" value="PRK05457.1"/>
    <property type="match status" value="1"/>
</dbReference>
<dbReference type="PANTHER" id="PTHR43221">
    <property type="entry name" value="PROTEASE HTPX"/>
    <property type="match status" value="1"/>
</dbReference>
<dbReference type="PANTHER" id="PTHR43221:SF1">
    <property type="entry name" value="PROTEASE HTPX"/>
    <property type="match status" value="1"/>
</dbReference>
<dbReference type="Pfam" id="PF01435">
    <property type="entry name" value="Peptidase_M48"/>
    <property type="match status" value="1"/>
</dbReference>
<reference key="1">
    <citation type="journal article" date="2004" name="Proc. Natl. Acad. Sci. U.S.A.">
        <title>Genome sequence of the deep-sea gamma-proteobacterium Idiomarina loihiensis reveals amino acid fermentation as a source of carbon and energy.</title>
        <authorList>
            <person name="Hou S."/>
            <person name="Saw J.H."/>
            <person name="Lee K.S."/>
            <person name="Freitas T.A."/>
            <person name="Belisle C."/>
            <person name="Kawarabayasi Y."/>
            <person name="Donachie S.P."/>
            <person name="Pikina A."/>
            <person name="Galperin M.Y."/>
            <person name="Koonin E.V."/>
            <person name="Makarova K.S."/>
            <person name="Omelchenko M.V."/>
            <person name="Sorokin A."/>
            <person name="Wolf Y.I."/>
            <person name="Li Q.X."/>
            <person name="Keum Y.S."/>
            <person name="Campbell S."/>
            <person name="Denery J."/>
            <person name="Aizawa S."/>
            <person name="Shibata S."/>
            <person name="Malahoff A."/>
            <person name="Alam M."/>
        </authorList>
    </citation>
    <scope>NUCLEOTIDE SEQUENCE [LARGE SCALE GENOMIC DNA]</scope>
    <source>
        <strain>ATCC BAA-735 / DSM 15497 / L2-TR</strain>
    </source>
</reference>
<comment type="cofactor">
    <cofactor evidence="1">
        <name>Zn(2+)</name>
        <dbReference type="ChEBI" id="CHEBI:29105"/>
    </cofactor>
    <text evidence="1">Binds 1 zinc ion per subunit.</text>
</comment>
<comment type="subcellular location">
    <subcellularLocation>
        <location evidence="1">Cell inner membrane</location>
        <topology evidence="1">Multi-pass membrane protein</topology>
    </subcellularLocation>
</comment>
<comment type="similarity">
    <text evidence="1">Belongs to the peptidase M48B family.</text>
</comment>
<feature type="chain" id="PRO_1000020874" description="Protease HtpX">
    <location>
        <begin position="1"/>
        <end position="287"/>
    </location>
</feature>
<feature type="transmembrane region" description="Helical" evidence="1">
    <location>
        <begin position="4"/>
        <end position="24"/>
    </location>
</feature>
<feature type="transmembrane region" description="Helical" evidence="1">
    <location>
        <begin position="37"/>
        <end position="57"/>
    </location>
</feature>
<feature type="transmembrane region" description="Helical" evidence="1">
    <location>
        <begin position="158"/>
        <end position="178"/>
    </location>
</feature>
<feature type="transmembrane region" description="Helical" evidence="1">
    <location>
        <begin position="194"/>
        <end position="214"/>
    </location>
</feature>
<feature type="active site" evidence="1">
    <location>
        <position position="144"/>
    </location>
</feature>
<feature type="binding site" evidence="1">
    <location>
        <position position="143"/>
    </location>
    <ligand>
        <name>Zn(2+)</name>
        <dbReference type="ChEBI" id="CHEBI:29105"/>
        <note>catalytic</note>
    </ligand>
</feature>
<feature type="binding site" evidence="1">
    <location>
        <position position="147"/>
    </location>
    <ligand>
        <name>Zn(2+)</name>
        <dbReference type="ChEBI" id="CHEBI:29105"/>
        <note>catalytic</note>
    </ligand>
</feature>
<feature type="binding site" evidence="1">
    <location>
        <position position="219"/>
    </location>
    <ligand>
        <name>Zn(2+)</name>
        <dbReference type="ChEBI" id="CHEBI:29105"/>
        <note>catalytic</note>
    </ligand>
</feature>
<accession>Q5QZ20</accession>
<protein>
    <recommendedName>
        <fullName evidence="1">Protease HtpX</fullName>
        <ecNumber evidence="1">3.4.24.-</ecNumber>
    </recommendedName>
    <alternativeName>
        <fullName evidence="1">Heat shock protein HtpX</fullName>
    </alternativeName>
</protein>
<evidence type="ECO:0000255" key="1">
    <source>
        <dbReference type="HAMAP-Rule" id="MF_00188"/>
    </source>
</evidence>
<gene>
    <name evidence="1" type="primary">htpX</name>
    <name type="ordered locus">IL1320</name>
</gene>
<keyword id="KW-0997">Cell inner membrane</keyword>
<keyword id="KW-1003">Cell membrane</keyword>
<keyword id="KW-0378">Hydrolase</keyword>
<keyword id="KW-0472">Membrane</keyword>
<keyword id="KW-0479">Metal-binding</keyword>
<keyword id="KW-0482">Metalloprotease</keyword>
<keyword id="KW-0645">Protease</keyword>
<keyword id="KW-1185">Reference proteome</keyword>
<keyword id="KW-0812">Transmembrane</keyword>
<keyword id="KW-1133">Transmembrane helix</keyword>
<keyword id="KW-0862">Zinc</keyword>
<proteinExistence type="inferred from homology"/>